<gene>
    <name evidence="1" type="primary">M</name>
</gene>
<reference key="1">
    <citation type="submission" date="1989-01" db="EMBL/GenBank/DDBJ databases">
        <authorList>
            <person name="Brownlee G.G."/>
        </authorList>
    </citation>
    <scope>NUCLEOTIDE SEQUENCE [GENOMIC RNA]</scope>
</reference>
<protein>
    <recommendedName>
        <fullName evidence="1">Matrix protein 2</fullName>
    </recommendedName>
    <alternativeName>
        <fullName evidence="1">Proton channel protein M2</fullName>
    </alternativeName>
</protein>
<proteinExistence type="inferred from homology"/>
<evidence type="ECO:0000255" key="1">
    <source>
        <dbReference type="HAMAP-Rule" id="MF_04069"/>
    </source>
</evidence>
<evidence type="ECO:0000256" key="2">
    <source>
        <dbReference type="SAM" id="MobiDB-lite"/>
    </source>
</evidence>
<accession>Q76R36</accession>
<keyword id="KW-0025">Alternative splicing</keyword>
<keyword id="KW-1015">Disulfide bond</keyword>
<keyword id="KW-0325">Glycoprotein</keyword>
<keyword id="KW-1032">Host cell membrane</keyword>
<keyword id="KW-1043">Host membrane</keyword>
<keyword id="KW-0945">Host-virus interaction</keyword>
<keyword id="KW-0375">Hydrogen ion transport</keyword>
<keyword id="KW-1083">Inhibition of host autophagy by virus</keyword>
<keyword id="KW-0407">Ion channel</keyword>
<keyword id="KW-0406">Ion transport</keyword>
<keyword id="KW-0449">Lipoprotein</keyword>
<keyword id="KW-0472">Membrane</keyword>
<keyword id="KW-0564">Palmitate</keyword>
<keyword id="KW-0597">Phosphoprotein</keyword>
<keyword id="KW-0735">Signal-anchor</keyword>
<keyword id="KW-0812">Transmembrane</keyword>
<keyword id="KW-1133">Transmembrane helix</keyword>
<keyword id="KW-0813">Transport</keyword>
<keyword id="KW-1182">Viral ion channel</keyword>
<keyword id="KW-0946">Virion</keyword>
<organismHost>
    <name type="scientific">Aves</name>
    <dbReference type="NCBI Taxonomy" id="8782"/>
</organismHost>
<organismHost>
    <name type="scientific">Cetacea</name>
    <name type="common">whales</name>
    <dbReference type="NCBI Taxonomy" id="9721"/>
</organismHost>
<organismHost>
    <name type="scientific">Homo sapiens</name>
    <name type="common">Human</name>
    <dbReference type="NCBI Taxonomy" id="9606"/>
</organismHost>
<organismHost>
    <name type="scientific">Phocidae</name>
    <name type="common">true seals</name>
    <dbReference type="NCBI Taxonomy" id="9709"/>
</organismHost>
<organismHost>
    <name type="scientific">Sus scrofa</name>
    <name type="common">Pig</name>
    <dbReference type="NCBI Taxonomy" id="9823"/>
</organismHost>
<organism>
    <name type="scientific">Influenza A virus (strain A/Northern Territory/60/1968 H3N2)</name>
    <name type="common">Influenza A virus (strain NT60)</name>
    <name type="synonym">Influenza A virus (strain A/NT/60/1968 H3N2)</name>
    <dbReference type="NCBI Taxonomy" id="384505"/>
    <lineage>
        <taxon>Viruses</taxon>
        <taxon>Riboviria</taxon>
        <taxon>Orthornavirae</taxon>
        <taxon>Negarnaviricota</taxon>
        <taxon>Polyploviricotina</taxon>
        <taxon>Insthoviricetes</taxon>
        <taxon>Articulavirales</taxon>
        <taxon>Orthomyxoviridae</taxon>
        <taxon>Alphainfluenzavirus</taxon>
        <taxon>Alphainfluenzavirus influenzae</taxon>
        <taxon>Influenza A virus</taxon>
    </lineage>
</organism>
<dbReference type="EMBL" id="X59240">
    <property type="protein sequence ID" value="CAA41929.1"/>
    <property type="molecule type" value="Genomic_RNA"/>
</dbReference>
<dbReference type="SMR" id="Q76R36"/>
<dbReference type="IntAct" id="Q76R36">
    <property type="interactions" value="1"/>
</dbReference>
<dbReference type="GlyCosmos" id="Q76R36">
    <property type="glycosylation" value="1 site, No reported glycans"/>
</dbReference>
<dbReference type="GO" id="GO:0020002">
    <property type="term" value="C:host cell plasma membrane"/>
    <property type="evidence" value="ECO:0007669"/>
    <property type="project" value="UniProtKB-SubCell"/>
</dbReference>
<dbReference type="GO" id="GO:0016020">
    <property type="term" value="C:membrane"/>
    <property type="evidence" value="ECO:0007669"/>
    <property type="project" value="UniProtKB-UniRule"/>
</dbReference>
<dbReference type="GO" id="GO:0055036">
    <property type="term" value="C:virion membrane"/>
    <property type="evidence" value="ECO:0007669"/>
    <property type="project" value="UniProtKB-SubCell"/>
</dbReference>
<dbReference type="GO" id="GO:0005216">
    <property type="term" value="F:monoatomic ion channel activity"/>
    <property type="evidence" value="ECO:0007669"/>
    <property type="project" value="UniProtKB-UniRule"/>
</dbReference>
<dbReference type="GO" id="GO:0015078">
    <property type="term" value="F:proton transmembrane transporter activity"/>
    <property type="evidence" value="ECO:0007669"/>
    <property type="project" value="UniProtKB-UniRule"/>
</dbReference>
<dbReference type="GO" id="GO:0051259">
    <property type="term" value="P:protein complex oligomerization"/>
    <property type="evidence" value="ECO:0007669"/>
    <property type="project" value="UniProtKB-UniRule"/>
</dbReference>
<dbReference type="GO" id="GO:0044694">
    <property type="term" value="P:symbiont genome entry into host cell via pore formation in plasma membrane"/>
    <property type="evidence" value="ECO:0007669"/>
    <property type="project" value="UniProtKB-UniRule"/>
</dbReference>
<dbReference type="GO" id="GO:0140321">
    <property type="term" value="P:symbiont-mediated suppression of host autophagy"/>
    <property type="evidence" value="ECO:0007669"/>
    <property type="project" value="UniProtKB-KW"/>
</dbReference>
<dbReference type="Gene3D" id="6.10.250.1640">
    <property type="match status" value="1"/>
</dbReference>
<dbReference type="HAMAP" id="MF_04069">
    <property type="entry name" value="INFV_M2"/>
    <property type="match status" value="1"/>
</dbReference>
<dbReference type="InterPro" id="IPR002089">
    <property type="entry name" value="Flu_M2"/>
</dbReference>
<dbReference type="Pfam" id="PF00599">
    <property type="entry name" value="Flu_M2"/>
    <property type="match status" value="1"/>
</dbReference>
<sequence>MSLLTEVETPIRNEWGCRCNDSSDPLVVAASIIGILHLILWILDRLFFKCIYRFFEHGLKRGPSTEGVPESMREEYRKEQQSAVDADDSHFVSIELE</sequence>
<feature type="chain" id="PRO_0000326348" description="Matrix protein 2">
    <location>
        <begin position="1"/>
        <end position="97"/>
    </location>
</feature>
<feature type="topological domain" description="Virion surface" evidence="1">
    <location>
        <begin position="1"/>
        <end position="22"/>
    </location>
</feature>
<feature type="transmembrane region" description="Helical; Signal-anchor for type III membrane protein" evidence="1">
    <location>
        <begin position="23"/>
        <end position="43"/>
    </location>
</feature>
<feature type="topological domain" description="Intravirion" evidence="1">
    <location>
        <begin position="44"/>
        <end position="97"/>
    </location>
</feature>
<feature type="region of interest" description="Disordered" evidence="2">
    <location>
        <begin position="60"/>
        <end position="88"/>
    </location>
</feature>
<feature type="compositionally biased region" description="Basic and acidic residues" evidence="2">
    <location>
        <begin position="71"/>
        <end position="80"/>
    </location>
</feature>
<feature type="site" description="Essential for channel activity, possibly by being protonated during channel activation, and by forming the channel gate and the selective filter" evidence="1">
    <location>
        <position position="37"/>
    </location>
</feature>
<feature type="site" description="Seems to be involved in pH gating" evidence="1">
    <location>
        <position position="41"/>
    </location>
</feature>
<feature type="modified residue" description="Phosphoserine; by host" evidence="1">
    <location>
        <position position="64"/>
    </location>
</feature>
<feature type="modified residue" description="Phosphoserine; by host" evidence="1">
    <location>
        <position position="82"/>
    </location>
</feature>
<feature type="modified residue" description="Phosphoserine; by host" evidence="1">
    <location>
        <position position="93"/>
    </location>
</feature>
<feature type="lipid moiety-binding region" description="S-palmitoyl cysteine; by host" evidence="1">
    <location>
        <position position="50"/>
    </location>
</feature>
<feature type="glycosylation site" description="N-linked (GlcNAc...) asparagine; by host" evidence="1">
    <location>
        <position position="20"/>
    </location>
</feature>
<feature type="disulfide bond" description="Interchain (with C-17)" evidence="1">
    <location>
        <position position="17"/>
    </location>
</feature>
<feature type="disulfide bond" description="Interchain (with C-19)" evidence="1">
    <location>
        <position position="19"/>
    </location>
</feature>
<name>M2_I68A6</name>
<comment type="function">
    <text evidence="1">Forms a proton-selective ion channel that is necessary for the efficient release of the viral genome during virus entry. After attaching to the cell surface, the virion enters the cell by endocytosis. Acidification of the endosome triggers M2 ion channel activity. The influx of protons into virion interior is believed to disrupt interactions between the viral ribonucleoprotein (RNP), matrix protein 1 (M1), and lipid bilayers, thereby freeing the viral genome from interaction with viral proteins and enabling RNA segments to migrate to the host cell nucleus, where influenza virus RNA transcription and replication occur. Also plays a role in viral proteins secretory pathway. Elevates the intravesicular pH of normally acidic compartments, such as trans-Golgi network, preventing newly formed hemagglutinin from premature switching to the fusion-active conformation.</text>
</comment>
<comment type="activity regulation">
    <text>The M2 protein from most influenza A strains is inhibited by amantadine and rimantadine, resulting in viral uncoating incapacity. Emergence of amantadine-resistant variants is usually rapid.</text>
</comment>
<comment type="subunit">
    <text evidence="1">Homotetramer; composed of two disulfide-linked dimers held together by non-covalent interactions. May interact with matrix protein 1.</text>
</comment>
<comment type="subcellular location">
    <subcellularLocation>
        <location evidence="1">Virion membrane</location>
    </subcellularLocation>
    <subcellularLocation>
        <location evidence="1">Host apical cell membrane</location>
        <topology evidence="1">Single-pass type III membrane protein</topology>
    </subcellularLocation>
    <text evidence="1">Abundantly expressed at the apical plasma membrane in infected polarized epithelial cells, in close proximity to budding and assembled virions. Minor component of virions (only 16-20 molecules/virion).</text>
</comment>
<comment type="alternative products">
    <event type="alternative splicing"/>
    <isoform>
        <id>Q76R36-1</id>
        <name>M2</name>
        <sequence type="displayed"/>
    </isoform>
    <isoform>
        <id>Q76R37-1</id>
        <name>M1</name>
        <sequence type="external"/>
    </isoform>
    <text>Only the first 9 residues are shared by the 2 isoforms.</text>
</comment>
<comment type="domain">
    <text evidence="1">Cytoplasmic tail plays an important role in virion assembly and morphogenesis.</text>
</comment>
<comment type="miscellaneous">
    <text evidence="1">When the channel is activated, one or more imidazole moieties of His-37 probably become bi-protonated.</text>
</comment>
<comment type="similarity">
    <text evidence="1">Belongs to the influenza viruses matrix protein M2 family.</text>
</comment>